<reference key="1">
    <citation type="journal article" date="2001" name="Oncogene">
        <title>Ras-GAP SH3 domain binding protein (G3BP) is a modulator of USP10, a novel human ubiquitin specific protease.</title>
        <authorList>
            <person name="Soncini C."/>
            <person name="Berdo I."/>
            <person name="Draetta G."/>
        </authorList>
    </citation>
    <scope>NUCLEOTIDE SEQUENCE [MRNA] (ISOFORM 1)</scope>
    <scope>ACTIVE SITE</scope>
    <scope>TISSUE SPECIFICITY</scope>
    <scope>INTERACTION WITH G3BP</scope>
    <scope>MUTAGENESIS OF CYS-424</scope>
</reference>
<reference key="2">
    <citation type="journal article" date="1996" name="DNA Res.">
        <title>Prediction of the coding sequences of unidentified human genes. V. The coding sequences of 40 new genes (KIAA0161-KIAA0200) deduced by analysis of cDNA clones from human cell line KG-1.</title>
        <authorList>
            <person name="Nagase T."/>
            <person name="Seki N."/>
            <person name="Ishikawa K."/>
            <person name="Tanaka A."/>
            <person name="Nomura N."/>
        </authorList>
    </citation>
    <scope>NUCLEOTIDE SEQUENCE [LARGE SCALE MRNA] (ISOFORM 2)</scope>
    <source>
        <tissue>Bone marrow</tissue>
    </source>
</reference>
<reference key="3">
    <citation type="journal article" date="2004" name="Nat. Genet.">
        <title>Complete sequencing and characterization of 21,243 full-length human cDNAs.</title>
        <authorList>
            <person name="Ota T."/>
            <person name="Suzuki Y."/>
            <person name="Nishikawa T."/>
            <person name="Otsuki T."/>
            <person name="Sugiyama T."/>
            <person name="Irie R."/>
            <person name="Wakamatsu A."/>
            <person name="Hayashi K."/>
            <person name="Sato H."/>
            <person name="Nagai K."/>
            <person name="Kimura K."/>
            <person name="Makita H."/>
            <person name="Sekine M."/>
            <person name="Obayashi M."/>
            <person name="Nishi T."/>
            <person name="Shibahara T."/>
            <person name="Tanaka T."/>
            <person name="Ishii S."/>
            <person name="Yamamoto J."/>
            <person name="Saito K."/>
            <person name="Kawai Y."/>
            <person name="Isono Y."/>
            <person name="Nakamura Y."/>
            <person name="Nagahari K."/>
            <person name="Murakami K."/>
            <person name="Yasuda T."/>
            <person name="Iwayanagi T."/>
            <person name="Wagatsuma M."/>
            <person name="Shiratori A."/>
            <person name="Sudo H."/>
            <person name="Hosoiri T."/>
            <person name="Kaku Y."/>
            <person name="Kodaira H."/>
            <person name="Kondo H."/>
            <person name="Sugawara M."/>
            <person name="Takahashi M."/>
            <person name="Kanda K."/>
            <person name="Yokoi T."/>
            <person name="Furuya T."/>
            <person name="Kikkawa E."/>
            <person name="Omura Y."/>
            <person name="Abe K."/>
            <person name="Kamihara K."/>
            <person name="Katsuta N."/>
            <person name="Sato K."/>
            <person name="Tanikawa M."/>
            <person name="Yamazaki M."/>
            <person name="Ninomiya K."/>
            <person name="Ishibashi T."/>
            <person name="Yamashita H."/>
            <person name="Murakawa K."/>
            <person name="Fujimori K."/>
            <person name="Tanai H."/>
            <person name="Kimata M."/>
            <person name="Watanabe M."/>
            <person name="Hiraoka S."/>
            <person name="Chiba Y."/>
            <person name="Ishida S."/>
            <person name="Ono Y."/>
            <person name="Takiguchi S."/>
            <person name="Watanabe S."/>
            <person name="Yosida M."/>
            <person name="Hotuta T."/>
            <person name="Kusano J."/>
            <person name="Kanehori K."/>
            <person name="Takahashi-Fujii A."/>
            <person name="Hara H."/>
            <person name="Tanase T.-O."/>
            <person name="Nomura Y."/>
            <person name="Togiya S."/>
            <person name="Komai F."/>
            <person name="Hara R."/>
            <person name="Takeuchi K."/>
            <person name="Arita M."/>
            <person name="Imose N."/>
            <person name="Musashino K."/>
            <person name="Yuuki H."/>
            <person name="Oshima A."/>
            <person name="Sasaki N."/>
            <person name="Aotsuka S."/>
            <person name="Yoshikawa Y."/>
            <person name="Matsunawa H."/>
            <person name="Ichihara T."/>
            <person name="Shiohata N."/>
            <person name="Sano S."/>
            <person name="Moriya S."/>
            <person name="Momiyama H."/>
            <person name="Satoh N."/>
            <person name="Takami S."/>
            <person name="Terashima Y."/>
            <person name="Suzuki O."/>
            <person name="Nakagawa S."/>
            <person name="Senoh A."/>
            <person name="Mizoguchi H."/>
            <person name="Goto Y."/>
            <person name="Shimizu F."/>
            <person name="Wakebe H."/>
            <person name="Hishigaki H."/>
            <person name="Watanabe T."/>
            <person name="Sugiyama A."/>
            <person name="Takemoto M."/>
            <person name="Kawakami B."/>
            <person name="Yamazaki M."/>
            <person name="Watanabe K."/>
            <person name="Kumagai A."/>
            <person name="Itakura S."/>
            <person name="Fukuzumi Y."/>
            <person name="Fujimori Y."/>
            <person name="Komiyama M."/>
            <person name="Tashiro H."/>
            <person name="Tanigami A."/>
            <person name="Fujiwara T."/>
            <person name="Ono T."/>
            <person name="Yamada K."/>
            <person name="Fujii Y."/>
            <person name="Ozaki K."/>
            <person name="Hirao M."/>
            <person name="Ohmori Y."/>
            <person name="Kawabata A."/>
            <person name="Hikiji T."/>
            <person name="Kobatake N."/>
            <person name="Inagaki H."/>
            <person name="Ikema Y."/>
            <person name="Okamoto S."/>
            <person name="Okitani R."/>
            <person name="Kawakami T."/>
            <person name="Noguchi S."/>
            <person name="Itoh T."/>
            <person name="Shigeta K."/>
            <person name="Senba T."/>
            <person name="Matsumura K."/>
            <person name="Nakajima Y."/>
            <person name="Mizuno T."/>
            <person name="Morinaga M."/>
            <person name="Sasaki M."/>
            <person name="Togashi T."/>
            <person name="Oyama M."/>
            <person name="Hata H."/>
            <person name="Watanabe M."/>
            <person name="Komatsu T."/>
            <person name="Mizushima-Sugano J."/>
            <person name="Satoh T."/>
            <person name="Shirai Y."/>
            <person name="Takahashi Y."/>
            <person name="Nakagawa K."/>
            <person name="Okumura K."/>
            <person name="Nagase T."/>
            <person name="Nomura N."/>
            <person name="Kikuchi H."/>
            <person name="Masuho Y."/>
            <person name="Yamashita R."/>
            <person name="Nakai K."/>
            <person name="Yada T."/>
            <person name="Nakamura Y."/>
            <person name="Ohara O."/>
            <person name="Isogai T."/>
            <person name="Sugano S."/>
        </authorList>
    </citation>
    <scope>NUCLEOTIDE SEQUENCE [LARGE SCALE MRNA] (ISOFORMS 1 AND 3)</scope>
    <source>
        <tissue>Brain</tissue>
        <tissue>Placenta</tissue>
    </source>
</reference>
<reference key="4">
    <citation type="journal article" date="2007" name="BMC Genomics">
        <title>The full-ORF clone resource of the German cDNA consortium.</title>
        <authorList>
            <person name="Bechtel S."/>
            <person name="Rosenfelder H."/>
            <person name="Duda A."/>
            <person name="Schmidt C.P."/>
            <person name="Ernst U."/>
            <person name="Wellenreuther R."/>
            <person name="Mehrle A."/>
            <person name="Schuster C."/>
            <person name="Bahr A."/>
            <person name="Bloecker H."/>
            <person name="Heubner D."/>
            <person name="Hoerlein A."/>
            <person name="Michel G."/>
            <person name="Wedler H."/>
            <person name="Koehrer K."/>
            <person name="Ottenwaelder B."/>
            <person name="Poustka A."/>
            <person name="Wiemann S."/>
            <person name="Schupp I."/>
        </authorList>
    </citation>
    <scope>NUCLEOTIDE SEQUENCE [LARGE SCALE MRNA] (ISOFORM 1)</scope>
    <scope>VARIANT VAL-200</scope>
    <source>
        <tissue>Melanoma</tissue>
        <tissue>Retina</tissue>
    </source>
</reference>
<reference key="5">
    <citation type="journal article" date="2004" name="Nature">
        <title>The sequence and analysis of duplication-rich human chromosome 16.</title>
        <authorList>
            <person name="Martin J."/>
            <person name="Han C."/>
            <person name="Gordon L.A."/>
            <person name="Terry A."/>
            <person name="Prabhakar S."/>
            <person name="She X."/>
            <person name="Xie G."/>
            <person name="Hellsten U."/>
            <person name="Chan Y.M."/>
            <person name="Altherr M."/>
            <person name="Couronne O."/>
            <person name="Aerts A."/>
            <person name="Bajorek E."/>
            <person name="Black S."/>
            <person name="Blumer H."/>
            <person name="Branscomb E."/>
            <person name="Brown N.C."/>
            <person name="Bruno W.J."/>
            <person name="Buckingham J.M."/>
            <person name="Callen D.F."/>
            <person name="Campbell C.S."/>
            <person name="Campbell M.L."/>
            <person name="Campbell E.W."/>
            <person name="Caoile C."/>
            <person name="Challacombe J.F."/>
            <person name="Chasteen L.A."/>
            <person name="Chertkov O."/>
            <person name="Chi H.C."/>
            <person name="Christensen M."/>
            <person name="Clark L.M."/>
            <person name="Cohn J.D."/>
            <person name="Denys M."/>
            <person name="Detter J.C."/>
            <person name="Dickson M."/>
            <person name="Dimitrijevic-Bussod M."/>
            <person name="Escobar J."/>
            <person name="Fawcett J.J."/>
            <person name="Flowers D."/>
            <person name="Fotopulos D."/>
            <person name="Glavina T."/>
            <person name="Gomez M."/>
            <person name="Gonzales E."/>
            <person name="Goodstein D."/>
            <person name="Goodwin L.A."/>
            <person name="Grady D.L."/>
            <person name="Grigoriev I."/>
            <person name="Groza M."/>
            <person name="Hammon N."/>
            <person name="Hawkins T."/>
            <person name="Haydu L."/>
            <person name="Hildebrand C.E."/>
            <person name="Huang W."/>
            <person name="Israni S."/>
            <person name="Jett J."/>
            <person name="Jewett P.B."/>
            <person name="Kadner K."/>
            <person name="Kimball H."/>
            <person name="Kobayashi A."/>
            <person name="Krawczyk M.-C."/>
            <person name="Leyba T."/>
            <person name="Longmire J.L."/>
            <person name="Lopez F."/>
            <person name="Lou Y."/>
            <person name="Lowry S."/>
            <person name="Ludeman T."/>
            <person name="Manohar C.F."/>
            <person name="Mark G.A."/>
            <person name="McMurray K.L."/>
            <person name="Meincke L.J."/>
            <person name="Morgan J."/>
            <person name="Moyzis R.K."/>
            <person name="Mundt M.O."/>
            <person name="Munk A.C."/>
            <person name="Nandkeshwar R.D."/>
            <person name="Pitluck S."/>
            <person name="Pollard M."/>
            <person name="Predki P."/>
            <person name="Parson-Quintana B."/>
            <person name="Ramirez L."/>
            <person name="Rash S."/>
            <person name="Retterer J."/>
            <person name="Ricke D.O."/>
            <person name="Robinson D.L."/>
            <person name="Rodriguez A."/>
            <person name="Salamov A."/>
            <person name="Saunders E.H."/>
            <person name="Scott D."/>
            <person name="Shough T."/>
            <person name="Stallings R.L."/>
            <person name="Stalvey M."/>
            <person name="Sutherland R.D."/>
            <person name="Tapia R."/>
            <person name="Tesmer J.G."/>
            <person name="Thayer N."/>
            <person name="Thompson L.S."/>
            <person name="Tice H."/>
            <person name="Torney D.C."/>
            <person name="Tran-Gyamfi M."/>
            <person name="Tsai M."/>
            <person name="Ulanovsky L.E."/>
            <person name="Ustaszewska A."/>
            <person name="Vo N."/>
            <person name="White P.S."/>
            <person name="Williams A.L."/>
            <person name="Wills P.L."/>
            <person name="Wu J.-R."/>
            <person name="Wu K."/>
            <person name="Yang J."/>
            <person name="DeJong P."/>
            <person name="Bruce D."/>
            <person name="Doggett N.A."/>
            <person name="Deaven L."/>
            <person name="Schmutz J."/>
            <person name="Grimwood J."/>
            <person name="Richardson P."/>
            <person name="Rokhsar D.S."/>
            <person name="Eichler E.E."/>
            <person name="Gilna P."/>
            <person name="Lucas S.M."/>
            <person name="Myers R.M."/>
            <person name="Rubin E.M."/>
            <person name="Pennacchio L.A."/>
        </authorList>
    </citation>
    <scope>NUCLEOTIDE SEQUENCE [LARGE SCALE GENOMIC DNA]</scope>
</reference>
<reference key="6">
    <citation type="journal article" date="2004" name="Genome Res.">
        <title>The status, quality, and expansion of the NIH full-length cDNA project: the Mammalian Gene Collection (MGC).</title>
        <authorList>
            <consortium name="The MGC Project Team"/>
        </authorList>
    </citation>
    <scope>NUCLEOTIDE SEQUENCE [LARGE SCALE MRNA] (ISOFORM 1)</scope>
    <scope>VARIANTS PRO-203 AND LEU-204</scope>
    <source>
        <tissue>Brain</tissue>
    </source>
</reference>
<reference key="7">
    <citation type="journal article" date="2006" name="Cell">
        <title>Global, in vivo, and site-specific phosphorylation dynamics in signaling networks.</title>
        <authorList>
            <person name="Olsen J.V."/>
            <person name="Blagoev B."/>
            <person name="Gnad F."/>
            <person name="Macek B."/>
            <person name="Kumar C."/>
            <person name="Mortensen P."/>
            <person name="Mann M."/>
        </authorList>
    </citation>
    <scope>PHOSPHORYLATION [LARGE SCALE ANALYSIS] AT SER-576</scope>
    <scope>IDENTIFICATION BY MASS SPECTROMETRY [LARGE SCALE ANALYSIS]</scope>
    <source>
        <tissue>Cervix carcinoma</tissue>
    </source>
</reference>
<reference key="8">
    <citation type="journal article" date="2006" name="Nat. Biotechnol.">
        <title>A probability-based approach for high-throughput protein phosphorylation analysis and site localization.</title>
        <authorList>
            <person name="Beausoleil S.A."/>
            <person name="Villen J."/>
            <person name="Gerber S.A."/>
            <person name="Rush J."/>
            <person name="Gygi S.P."/>
        </authorList>
    </citation>
    <scope>PHOSPHORYLATION [LARGE SCALE ANALYSIS] AT SER-365 AND SER-370</scope>
    <scope>IDENTIFICATION BY MASS SPECTROMETRY [LARGE SCALE ANALYSIS]</scope>
    <source>
        <tissue>Cervix carcinoma</tissue>
    </source>
</reference>
<reference key="9">
    <citation type="journal article" date="2007" name="Electrophoresis">
        <title>Toward a global characterization of the phosphoproteome in prostate cancer cells: identification of phosphoproteins in the LNCaP cell line.</title>
        <authorList>
            <person name="Giorgianni F."/>
            <person name="Zhao Y."/>
            <person name="Desiderio D.M."/>
            <person name="Beranova-Giorgianni S."/>
        </authorList>
    </citation>
    <scope>PHOSPHORYLATION [LARGE SCALE ANALYSIS] AT SER-576</scope>
    <scope>IDENTIFICATION BY MASS SPECTROMETRY [LARGE SCALE ANALYSIS]</scope>
    <source>
        <tissue>Prostate cancer</tissue>
    </source>
</reference>
<reference key="10">
    <citation type="journal article" date="2007" name="Mol. Cell. Proteomics">
        <title>Quantitative phosphoproteome profiling of Wnt3a-mediated signaling network: indicating the involvement of ribonucleoside-diphosphate reductase M2 subunit phosphorylation at residue serine 20 in canonical Wnt signal transduction.</title>
        <authorList>
            <person name="Tang L.-Y."/>
            <person name="Deng N."/>
            <person name="Wang L.-S."/>
            <person name="Dai J."/>
            <person name="Wang Z.-L."/>
            <person name="Jiang X.-S."/>
            <person name="Li S.-J."/>
            <person name="Li L."/>
            <person name="Sheng Q.-H."/>
            <person name="Wu D.-Q."/>
            <person name="Li L."/>
            <person name="Zeng R."/>
        </authorList>
    </citation>
    <scope>PHOSPHORYLATION [LARGE SCALE ANALYSIS] AT SER-576</scope>
    <scope>IDENTIFICATION BY MASS SPECTROMETRY [LARGE SCALE ANALYSIS]</scope>
    <source>
        <tissue>Embryonic kidney</tissue>
    </source>
</reference>
<reference key="11">
    <citation type="journal article" date="2008" name="Am. J. Physiol.">
        <title>Vasopressin-inducible ubiquitin-specific protease 10 increases ENaC cell surface expression by deubiquitylating and stabilizing sorting nexin 3.</title>
        <authorList>
            <person name="Boulkroun S."/>
            <person name="Ruffieux-Daidie D."/>
            <person name="Vitagliano J.J."/>
            <person name="Poirot O."/>
            <person name="Charles R.P."/>
            <person name="Lagnaz D."/>
            <person name="Firsov D."/>
            <person name="Kellenberger S."/>
            <person name="Staub O."/>
        </authorList>
    </citation>
    <scope>FUNCTION</scope>
</reference>
<reference key="12">
    <citation type="journal article" date="2008" name="Proc. Natl. Acad. Sci. U.S.A.">
        <title>A quantitative atlas of mitotic phosphorylation.</title>
        <authorList>
            <person name="Dephoure N."/>
            <person name="Zhou C."/>
            <person name="Villen J."/>
            <person name="Beausoleil S.A."/>
            <person name="Bakalarski C.E."/>
            <person name="Elledge S.J."/>
            <person name="Gygi S.P."/>
        </authorList>
    </citation>
    <scope>PHOSPHORYLATION [LARGE SCALE ANALYSIS] AT THR-100; SER-226 AND SER-370</scope>
    <scope>IDENTIFICATION BY MASS SPECTROMETRY [LARGE SCALE ANALYSIS]</scope>
    <source>
        <tissue>Cervix carcinoma</tissue>
    </source>
</reference>
<reference key="13">
    <citation type="journal article" date="2008" name="Proteomics">
        <title>Large-scale phosphoproteome analysis of human liver tissue by enrichment and fractionation of phosphopeptides with strong anion exchange chromatography.</title>
        <authorList>
            <person name="Han G."/>
            <person name="Ye M."/>
            <person name="Zhou H."/>
            <person name="Jiang X."/>
            <person name="Feng S."/>
            <person name="Jiang X."/>
            <person name="Tian R."/>
            <person name="Wan D."/>
            <person name="Zou H."/>
            <person name="Gu J."/>
        </authorList>
    </citation>
    <scope>PHOSPHORYLATION [LARGE SCALE ANALYSIS] AT SER-576</scope>
    <scope>IDENTIFICATION BY MASS SPECTROMETRY [LARGE SCALE ANALYSIS]</scope>
    <source>
        <tissue>Liver</tissue>
    </source>
</reference>
<reference key="14">
    <citation type="journal article" date="2009" name="Anal. Chem.">
        <title>Lys-N and trypsin cover complementary parts of the phosphoproteome in a refined SCX-based approach.</title>
        <authorList>
            <person name="Gauci S."/>
            <person name="Helbig A.O."/>
            <person name="Slijper M."/>
            <person name="Krijgsveld J."/>
            <person name="Heck A.J."/>
            <person name="Mohammed S."/>
        </authorList>
    </citation>
    <scope>IDENTIFICATION BY MASS SPECTROMETRY [LARGE SCALE ANALYSIS]</scope>
</reference>
<reference key="15">
    <citation type="journal article" date="2009" name="J. Biol. Chem.">
        <title>The deubiquitinating enzyme USP10 regulates the post-endocytic sorting of cystic fibrosis transmembrane conductance regulator in airway epithelial cells.</title>
        <authorList>
            <person name="Bomberger J.M."/>
            <person name="Barnaby R.L."/>
            <person name="Stanton B.A."/>
        </authorList>
    </citation>
    <scope>FUNCTION</scope>
    <scope>ACTIVE SITE</scope>
    <scope>SUBCELLULAR LOCATION</scope>
    <scope>MUTAGENESIS OF CYS-424</scope>
</reference>
<reference key="16">
    <citation type="journal article" date="2009" name="Sci. Signal.">
        <title>Quantitative phosphoproteomic analysis of T cell receptor signaling reveals system-wide modulation of protein-protein interactions.</title>
        <authorList>
            <person name="Mayya V."/>
            <person name="Lundgren D.H."/>
            <person name="Hwang S.-I."/>
            <person name="Rezaul K."/>
            <person name="Wu L."/>
            <person name="Eng J.K."/>
            <person name="Rodionov V."/>
            <person name="Han D.K."/>
        </authorList>
    </citation>
    <scope>PHOSPHORYLATION [LARGE SCALE ANALYSIS] AT SER-563 AND SER-576</scope>
    <scope>IDENTIFICATION BY MASS SPECTROMETRY [LARGE SCALE ANALYSIS]</scope>
    <source>
        <tissue>Leukemic T-cell</tissue>
    </source>
</reference>
<reference key="17">
    <citation type="journal article" date="2010" name="Cell">
        <title>USP10 regulates p53 localization and stability by deubiquitinating p53.</title>
        <authorList>
            <person name="Yuan J."/>
            <person name="Luo K."/>
            <person name="Zhang L."/>
            <person name="Cheville J.C."/>
            <person name="Lou Z."/>
        </authorList>
    </citation>
    <scope>FUNCTION</scope>
    <scope>CATALYTIC ACTIVITY</scope>
    <scope>SUBCELLULAR LOCATION</scope>
    <scope>INDUCTION</scope>
    <scope>PHOSPHORYLATION AT THR-42 AND SER-337</scope>
    <scope>MUTAGENESIS OF THR-42 AND SER-337</scope>
</reference>
<reference key="18">
    <citation type="journal article" date="2010" name="Sci. Signal.">
        <title>Quantitative phosphoproteomics reveals widespread full phosphorylation site occupancy during mitosis.</title>
        <authorList>
            <person name="Olsen J.V."/>
            <person name="Vermeulen M."/>
            <person name="Santamaria A."/>
            <person name="Kumar C."/>
            <person name="Miller M.L."/>
            <person name="Jensen L.J."/>
            <person name="Gnad F."/>
            <person name="Cox J."/>
            <person name="Jensen T.S."/>
            <person name="Nigg E.A."/>
            <person name="Brunak S."/>
            <person name="Mann M."/>
        </authorList>
    </citation>
    <scope>ACETYLATION [LARGE SCALE ANALYSIS] AT ALA-2</scope>
    <scope>PHOSPHORYLATION [LARGE SCALE ANALYSIS] AT THR-24; SER-365; SER-370 AND SER-576</scope>
    <scope>CLEAVAGE OF INITIATOR METHIONINE [LARGE SCALE ANALYSIS]</scope>
    <scope>IDENTIFICATION BY MASS SPECTROMETRY [LARGE SCALE ANALYSIS]</scope>
    <source>
        <tissue>Cervix carcinoma</tissue>
    </source>
</reference>
<reference key="19">
    <citation type="journal article" date="2011" name="BMC Syst. Biol.">
        <title>Initial characterization of the human central proteome.</title>
        <authorList>
            <person name="Burkard T.R."/>
            <person name="Planyavsky M."/>
            <person name="Kaupe I."/>
            <person name="Breitwieser F.P."/>
            <person name="Buerckstuemmer T."/>
            <person name="Bennett K.L."/>
            <person name="Superti-Furga G."/>
            <person name="Colinge J."/>
        </authorList>
    </citation>
    <scope>IDENTIFICATION BY MASS SPECTROMETRY [LARGE SCALE ANALYSIS]</scope>
</reference>
<reference key="20">
    <citation type="journal article" date="2011" name="Cell">
        <title>Beclin1 controls the levels of p53 by regulating the deubiquitination activity of USP10 and USP13.</title>
        <authorList>
            <person name="Liu J."/>
            <person name="Xia H."/>
            <person name="Kim M."/>
            <person name="Xu L."/>
            <person name="Li Y."/>
            <person name="Zhang L."/>
            <person name="Cai Y."/>
            <person name="Norberg H.V."/>
            <person name="Zhang T."/>
            <person name="Furuya T."/>
            <person name="Jin M."/>
            <person name="Zhu Z."/>
            <person name="Wang H."/>
            <person name="Yu J."/>
            <person name="Li Y."/>
            <person name="Hao Y."/>
            <person name="Choi A."/>
            <person name="Ke H."/>
            <person name="Ma D."/>
            <person name="Yuan J."/>
        </authorList>
    </citation>
    <scope>FUNCTION</scope>
    <scope>CATALYTIC ACTIVITY</scope>
    <scope>ACTIVE SITE</scope>
    <scope>ACTIVITY REGULATION</scope>
    <scope>UBIQUITINATION</scope>
    <scope>MUTAGENESIS OF CYS-424</scope>
</reference>
<reference key="21">
    <citation type="journal article" date="2011" name="Sci. Signal.">
        <title>System-wide temporal characterization of the proteome and phosphoproteome of human embryonic stem cell differentiation.</title>
        <authorList>
            <person name="Rigbolt K.T."/>
            <person name="Prokhorova T.A."/>
            <person name="Akimov V."/>
            <person name="Henningsen J."/>
            <person name="Johansen P.T."/>
            <person name="Kratchmarova I."/>
            <person name="Kassem M."/>
            <person name="Mann M."/>
            <person name="Olsen J.V."/>
            <person name="Blagoev B."/>
        </authorList>
    </citation>
    <scope>PHOSPHORYLATION [LARGE SCALE ANALYSIS] AT SER-576</scope>
    <scope>IDENTIFICATION BY MASS SPECTROMETRY [LARGE SCALE ANALYSIS]</scope>
</reference>
<reference key="22">
    <citation type="journal article" date="2013" name="J. Proteome Res.">
        <title>Toward a comprehensive characterization of a human cancer cell phosphoproteome.</title>
        <authorList>
            <person name="Zhou H."/>
            <person name="Di Palma S."/>
            <person name="Preisinger C."/>
            <person name="Peng M."/>
            <person name="Polat A.N."/>
            <person name="Heck A.J."/>
            <person name="Mohammed S."/>
        </authorList>
    </citation>
    <scope>PHOSPHORYLATION [LARGE SCALE ANALYSIS] AT SER-370; SER-547 AND SER-576</scope>
    <scope>IDENTIFICATION BY MASS SPECTROMETRY [LARGE SCALE ANALYSIS]</scope>
    <source>
        <tissue>Cervix carcinoma</tissue>
        <tissue>Erythroleukemia</tissue>
    </source>
</reference>
<reference key="23">
    <citation type="journal article" date="2013" name="Genes Cells">
        <title>Both G3BP1 and G3BP2 contribute to stress granule formation.</title>
        <authorList>
            <person name="Matsuki H."/>
            <person name="Takahashi M."/>
            <person name="Higuchi M."/>
            <person name="Makokha G.N."/>
            <person name="Oie M."/>
            <person name="Fujii M."/>
        </authorList>
    </citation>
    <scope>INTERACTION WITH G3BP1 AND G3BP2</scope>
</reference>
<reference key="24">
    <citation type="journal article" date="2014" name="Biochem. Biophys. Res. Commun.">
        <title>Deubiquitination and stabilization of T-bet by USP10.</title>
        <authorList>
            <person name="Pan L."/>
            <person name="Chen Z."/>
            <person name="Wang L."/>
            <person name="Chen C."/>
            <person name="Li D."/>
            <person name="Wan H."/>
            <person name="Li B."/>
            <person name="Shi G."/>
        </authorList>
    </citation>
    <scope>FUNCTION</scope>
    <scope>ACTIVE SITE</scope>
    <scope>SUBCELLULAR LOCATION</scope>
    <scope>MUTAGENESIS OF CYS-424</scope>
</reference>
<reference key="25">
    <citation type="journal article" date="2014" name="J. Proteomics">
        <title>An enzyme assisted RP-RPLC approach for in-depth analysis of human liver phosphoproteome.</title>
        <authorList>
            <person name="Bian Y."/>
            <person name="Song C."/>
            <person name="Cheng K."/>
            <person name="Dong M."/>
            <person name="Wang F."/>
            <person name="Huang J."/>
            <person name="Sun D."/>
            <person name="Wang L."/>
            <person name="Ye M."/>
            <person name="Zou H."/>
        </authorList>
    </citation>
    <scope>PHOSPHORYLATION [LARGE SCALE ANALYSIS] AT SER-321 AND SER-365</scope>
    <scope>IDENTIFICATION BY MASS SPECTROMETRY [LARGE SCALE ANALYSIS]</scope>
    <source>
        <tissue>Liver</tissue>
    </source>
</reference>
<reference key="26">
    <citation type="journal article" date="2015" name="J. Biol. Chem.">
        <title>TRAF family member-associated NF-kappaB activator (TANK) inhibits genotoxic nuclear factor kappaB activation by facilitating deubiquitinase USP10-dependent deubiquitination of TRAF6 ligase.</title>
        <authorList>
            <person name="Wang W."/>
            <person name="Huang X."/>
            <person name="Xin H.B."/>
            <person name="Fu M."/>
            <person name="Xue A."/>
            <person name="Wu Z.H."/>
        </authorList>
    </citation>
    <scope>FUNCTION</scope>
    <scope>IDENTIFICATION IN A DEUBIQUITINATION COMPLEX WITH TANK AND ZC3H12A</scope>
    <scope>INTERACTION WITH IKBKG; TANK; TRAF6 AND ZC3H12A</scope>
</reference>
<reference key="27">
    <citation type="journal article" date="2016" name="J. Cell Biol.">
        <title>G3BP-Caprin1-USP10 complexes mediate stress granule condensation and associate with 40S subunits.</title>
        <authorList>
            <person name="Kedersha N."/>
            <person name="Panas M.D."/>
            <person name="Achorn C.A."/>
            <person name="Lyons S."/>
            <person name="Tisdale S."/>
            <person name="Hickman T."/>
            <person name="Thomas M."/>
            <person name="Lieberman J."/>
            <person name="McInerney G.M."/>
            <person name="Ivanov P."/>
            <person name="Anderson P."/>
        </authorList>
    </citation>
    <scope>FUNCTION</scope>
    <scope>INTERACTION WITH G3BP1 AND G3BP2</scope>
    <scope>MUTAGENESIS OF PHE-10</scope>
</reference>
<reference key="28">
    <citation type="journal article" date="2020" name="Cell">
        <title>Competing protein-RNA interaction networks control multiphase intracellular organization.</title>
        <authorList>
            <person name="Sanders D.W."/>
            <person name="Kedersha N."/>
            <person name="Lee D.S.W."/>
            <person name="Strom A.R."/>
            <person name="Drake V."/>
            <person name="Riback J.A."/>
            <person name="Bracha D."/>
            <person name="Eeftens J.M."/>
            <person name="Iwanicki A."/>
            <person name="Wang A."/>
            <person name="Wei M.T."/>
            <person name="Whitney G."/>
            <person name="Lyons S.M."/>
            <person name="Anderson P."/>
            <person name="Jacobs W.M."/>
            <person name="Ivanov P."/>
            <person name="Brangwynne C.P."/>
        </authorList>
    </citation>
    <scope>FUNCTION</scope>
    <scope>INTERACTION WITH G3BP1</scope>
</reference>
<reference key="29">
    <citation type="journal article" date="2020" name="Elife">
        <title>Distinct regulatory ribosomal ubiquitylation events are reversible and hierarchically organized.</title>
        <authorList>
            <person name="Garshott D.M."/>
            <person name="Sundaramoorthy E."/>
            <person name="Leonard M."/>
            <person name="Bennett E.J."/>
        </authorList>
    </citation>
    <scope>CATALYTIC ACTIVITY</scope>
    <scope>ACTIVE SITE</scope>
    <scope>MUTAGENESIS OF CYS-424</scope>
</reference>
<reference key="30">
    <citation type="journal article" date="2020" name="Mol. Cell">
        <title>The G3BP1-family-USP10 deubiquitinase complex rescues ubiquitinated 40S subunits of ribosomes stalled in translation from lysosomal degradation.</title>
        <authorList>
            <person name="Meyer C."/>
            <person name="Garzia A."/>
            <person name="Morozov P."/>
            <person name="Molina H."/>
            <person name="Tuschl T."/>
        </authorList>
    </citation>
    <scope>FUNCTION</scope>
    <scope>CATALYTIC ACTIVITY</scope>
    <scope>ACTIVE SITE</scope>
    <scope>INTERACTION WITH G3BP1 AND G3BP2</scope>
    <scope>MUTAGENESIS OF CYS-424</scope>
</reference>
<reference key="31">
    <citation type="journal article" date="2021" name="Cell Rep.">
        <title>The E3 ubiquitin ligase RNF10 modifies 40S ribosomal subunits of ribosomes compromised in translation.</title>
        <authorList>
            <person name="Garzia A."/>
            <person name="Meyer C."/>
            <person name="Tuschl T."/>
        </authorList>
    </citation>
    <scope>FUNCTION</scope>
</reference>
<reference key="32">
    <citation type="journal article" date="2021" name="Cell Rep.">
        <title>iRQC, a surveillance pathway for 40S ribosomal quality control during mRNA translation initiation.</title>
        <authorList>
            <person name="Garshott D.M."/>
            <person name="An H."/>
            <person name="Sundaramoorthy E."/>
            <person name="Leonard M."/>
            <person name="Vicary A."/>
            <person name="Harper J.W."/>
            <person name="Bennett E.J."/>
        </authorList>
    </citation>
    <scope>FUNCTION</scope>
    <scope>CATALYTIC ACTIVITY</scope>
</reference>
<reference key="33">
    <citation type="journal article" date="2022" name="J. Biol. Chem.">
        <title>Tryptophan mutations in G3BP1 tune the stability of a cellular signaling hub by weakening transient interactions with Caprin1 and USP10.</title>
        <authorList>
            <person name="Sheehan C.T."/>
            <person name="Hampton T.H."/>
            <person name="Madden D.R."/>
        </authorList>
    </citation>
    <scope>INTERACTION WITH G3BP1</scope>
    <scope>MUTAGENESIS OF PHE-10; GLY-11; ASP-12 AND PHE-13</scope>
</reference>
<reference key="34">
    <citation type="journal article" date="2023" name="Cell. Mol. Immunol.">
        <title>MAVS-loaded unanchored Lys63-linked polyubiquitin chains activate the RIG-I-MAVS signaling cascade.</title>
        <authorList>
            <person name="Liu F."/>
            <person name="Zhuang W."/>
            <person name="Song B."/>
            <person name="Yang Y."/>
            <person name="Liu J."/>
            <person name="Zheng Y."/>
            <person name="Liu B."/>
            <person name="Zheng J."/>
            <person name="Zhao W."/>
            <person name="Gao C."/>
        </authorList>
    </citation>
    <scope>FUNCTION</scope>
    <scope>MUTAGENESIS OF CYS-424</scope>
    <scope>SUBCELLULAR LOCATION</scope>
</reference>
<reference key="35">
    <citation type="journal article" date="2022" name="Proc. Natl. Acad. Sci. U.S.A.">
        <title>Yin and yang regulation of stress granules by Caprin-1.</title>
        <authorList>
            <person name="Song D."/>
            <person name="Kuang L."/>
            <person name="Yang L."/>
            <person name="Wang L."/>
            <person name="Li H."/>
            <person name="Li X."/>
            <person name="Zhu Z."/>
            <person name="Shi C."/>
            <person name="Zhu H."/>
            <person name="Gong W."/>
        </authorList>
    </citation>
    <scope>X-RAY CRYSTALLOGRAPHY (2.46 ANGSTROMS) OF 6-21 IN COMPLEX WITH G3BP1</scope>
    <scope>INTERACTION WITH G3BP1</scope>
</reference>
<keyword id="KW-0002">3D-structure</keyword>
<keyword id="KW-0007">Acetylation</keyword>
<keyword id="KW-0025">Alternative splicing</keyword>
<keyword id="KW-0072">Autophagy</keyword>
<keyword id="KW-0963">Cytoplasm</keyword>
<keyword id="KW-0227">DNA damage</keyword>
<keyword id="KW-0234">DNA repair</keyword>
<keyword id="KW-0967">Endosome</keyword>
<keyword id="KW-0378">Hydrolase</keyword>
<keyword id="KW-0539">Nucleus</keyword>
<keyword id="KW-0597">Phosphoprotein</keyword>
<keyword id="KW-0645">Protease</keyword>
<keyword id="KW-1267">Proteomics identification</keyword>
<keyword id="KW-1185">Reference proteome</keyword>
<keyword id="KW-0788">Thiol protease</keyword>
<keyword id="KW-0832">Ubl conjugation</keyword>
<keyword id="KW-0833">Ubl conjugation pathway</keyword>
<comment type="function">
    <text evidence="5 8 9 10 11 13 14 15 16 18 19 20 23">Hydrolase that can remove conjugated ubiquitin from target proteins such as p53/TP53, RPS2/us5, RPS3/us3, RPS10/eS10, BECN1, SNX3 and CFTR (PubMed:11439350, PubMed:18632802, PubMed:31981475). Acts as an essential regulator of p53/TP53 stability: in unstressed cells, specifically deubiquitinates p53/TP53 in the cytoplasm, leading to counteract MDM2 action and stabilize p53/TP53 (PubMed:20096447). Following DNA damage, translocates to the nucleus and deubiquitinates p53/TP53, leading to regulate the p53/TP53-dependent DNA damage response (PubMed:20096447). Component of a regulatory loop that controls autophagy and p53/TP53 levels: mediates deubiquitination of BECN1, a key regulator of autophagy, leading to stabilize the PIK3C3/VPS34-containing complexes (PubMed:21962518). In turn, PIK3C3/VPS34-containing complexes regulate USP10 stability, suggesting the existence of a regulatory system by which PIK3C3/VPS34-containing complexes regulate p53/TP53 protein levels via USP10 and USP13 (PubMed:21962518). Does not deubiquitinate MDM2 (PubMed:20096447). Plays a key role in 40S ribosome subunit recycling when a ribosome has stalled during translation: acts both by inhibiting formation of stress granules, which store stalled translation pre-initiation complexes, and mediating deubiquitination of 40S ribosome subunits (PubMed:27022092, PubMed:31981475, PubMed:34348161, PubMed:34469731). Acts as a negative regulator of stress granules formation by lowering G3BP1 and G3BP2 valence, thereby preventing G3BP1 and G3BP2 ability to undergo liquid-liquid phase separation (LLPS) and assembly of stress granules (PubMed:11439350, PubMed:27022092, PubMed:32302570). Promotes 40S ribosome subunit recycling following ribosome dissociation in response to ribosome stalling by mediating deubiquitination of 40S ribosomal proteins RPS2/us5, RPS3/us3 and RPS10/eS10, thereby preventing their degradation by the proteasome (PubMed:31981475, PubMed:34348161, PubMed:34469731). Part of a ribosome quality control that takes place when ribosomes have stalled during translation initiation (iRQC): USP10 acts by removing monoubiquitination of RPS2/us5 and RPS3/us3, promoting 40S ribosomal subunit recycling (PubMed:34469731). Deubiquitinates CFTR in early endosomes, enhancing its endocytic recycling (PubMed:19398555). Involved in a TANK-dependent negative feedback response to attenuate NF-kappa-B activation via deubiquitinating IKBKG or TRAF6 in response to interleukin-1-beta (IL1B) stimulation or upon DNA damage (PubMed:25861989). Deubiquitinates TBX21 leading to its stabilization (PubMed:24845384). Plays a negative role in the RLR signaling pathway upon RNA virus infection by blocking the RIGI-mediated MAVS activation. Mechanistically, removes the unanchored 'Lys-63'-linked polyubiquitin chains of MAVS to inhibit its aggregation, essential for its activation (PubMed:37582970).</text>
</comment>
<comment type="catalytic activity">
    <reaction evidence="10 11 16 17">
        <text>Thiol-dependent hydrolysis of ester, thioester, amide, peptide and isopeptide bonds formed by the C-terminal Gly of ubiquitin (a 76-residue protein attached to proteins as an intracellular targeting signal).</text>
        <dbReference type="EC" id="3.4.19.12"/>
    </reaction>
</comment>
<comment type="activity regulation">
    <text evidence="11">Specifically inhibited by spautin-1 (specific and potent autophagy inhibitor-1), a derivative of MBCQ that binds to USP10 and inhibits deubiquitinase activity. Regulated by PIK3C3/VPS34-containing complexes.</text>
</comment>
<comment type="subunit">
    <text evidence="5 12 14 15 16 18 21 22">Found in a deubiquitination complex with TANK, USP10 and ZC3H12A; this complex inhibits genotoxic stress- or interleukin-1-beta (IL1B)-mediated NF-kappa-B activation by promoting IKBKG or TRAF6 deubiquitination (PubMed:25861989). Interacts with IKBKG; this interaction increases in response to DNA damage (PubMed:25861989). Interacts with TANK; this interaction increases in response to DNA damage (PubMed:25861989). Interacts with TRAF6; this interaction increases in response to DNA damage (PubMed:25861989). Interacts with ZC3H12A; this interaction increases in response to DNA damage (PubMed:25861989). Interacts with G3BP1 (via NTF2 domain) and G3BP2 (via NTF2 domain); inhibiting stress granule formation (PubMed:11439350, PubMed:23279204, PubMed:27022092, PubMed:31981475, PubMed:32302570, PubMed:36183834, PubMed:36279435).</text>
</comment>
<comment type="interaction">
    <interactant intactId="EBI-2510389">
        <id>Q14694</id>
    </interactant>
    <interactant intactId="EBI-349854">
        <id>P13569</id>
        <label>CFTR</label>
    </interactant>
    <organismsDiffer>false</organismsDiffer>
    <experiments>7</experiments>
</comment>
<comment type="interaction">
    <interactant intactId="EBI-2510389">
        <id>Q14694</id>
    </interactant>
    <interactant intactId="EBI-1047359">
        <id>Q13283</id>
        <label>G3BP1</label>
    </interactant>
    <organismsDiffer>false</organismsDiffer>
    <experiments>16</experiments>
</comment>
<comment type="interaction">
    <interactant intactId="EBI-2510389">
        <id>Q14694</id>
    </interactant>
    <interactant intactId="EBI-1044298">
        <id>Q9UN86</id>
        <label>G3BP2</label>
    </interactant>
    <organismsDiffer>false</organismsDiffer>
    <experiments>13</experiments>
</comment>
<comment type="interaction">
    <interactant intactId="EBI-2510389">
        <id>Q14694</id>
    </interactant>
    <interactant intactId="EBI-11035716">
        <id>Q9UN86-2</id>
        <label>G3BP2</label>
    </interactant>
    <organismsDiffer>false</organismsDiffer>
    <experiments>3</experiments>
</comment>
<comment type="interaction">
    <interactant intactId="EBI-2510389">
        <id>Q14694</id>
    </interactant>
    <interactant intactId="EBI-744302">
        <id>P14136</id>
        <label>GFAP</label>
    </interactant>
    <organismsDiffer>false</organismsDiffer>
    <experiments>3</experiments>
</comment>
<comment type="interaction">
    <interactant intactId="EBI-2510389">
        <id>Q14694</id>
    </interactant>
    <interactant intactId="EBI-1055254">
        <id>Q8WXH2</id>
        <label>JPH3</label>
    </interactant>
    <organismsDiffer>false</organismsDiffer>
    <experiments>3</experiments>
</comment>
<comment type="interaction">
    <interactant intactId="EBI-2510389">
        <id>Q14694</id>
    </interactant>
    <interactant intactId="EBI-296739">
        <id>P63244</id>
        <label>RACK1</label>
    </interactant>
    <organismsDiffer>false</organismsDiffer>
    <experiments>4</experiments>
</comment>
<comment type="interaction">
    <interactant intactId="EBI-2510389">
        <id>Q14694</id>
    </interactant>
    <interactant intactId="EBI-747793">
        <id>Q5D1E8</id>
        <label>ZC3H12A</label>
    </interactant>
    <organismsDiffer>false</organismsDiffer>
    <experiments>5</experiments>
</comment>
<comment type="subcellular location">
    <subcellularLocation>
        <location evidence="10 23">Cytoplasm</location>
    </subcellularLocation>
    <subcellularLocation>
        <location evidence="10 13">Nucleus</location>
    </subcellularLocation>
    <subcellularLocation>
        <location evidence="9">Early endosome</location>
    </subcellularLocation>
    <text evidence="10">Cytoplasmic in normal conditions (PubMed:20096447). After DNA damage, translocates to the nucleus following phosphorylation by ATM (PubMed:20096447).</text>
</comment>
<comment type="alternative products">
    <event type="alternative splicing"/>
    <isoform>
        <id>Q14694-1</id>
        <name>1</name>
        <sequence type="displayed"/>
    </isoform>
    <isoform>
        <id>Q14694-2</id>
        <name>2</name>
        <sequence type="described" ref="VSP_038869"/>
    </isoform>
    <isoform>
        <id>Q14694-3</id>
        <name>3</name>
        <sequence type="described" ref="VSP_038868"/>
    </isoform>
</comment>
<comment type="tissue specificity">
    <text evidence="5">Widely expressed.</text>
</comment>
<comment type="induction">
    <text evidence="10">Following DNA damage. Down-regulated in renal cell carcinomas.</text>
</comment>
<comment type="PTM">
    <text evidence="10">Phosphorylated by ATM following DNA damage, leading to stabilization and translocation it to the nucleus.</text>
</comment>
<comment type="PTM">
    <text evidence="11">Ubiquitinated. Deubiquitinated by USP13.</text>
</comment>
<comment type="similarity">
    <text evidence="27">Belongs to the peptidase C19 family. USP10 subfamily.</text>
</comment>
<comment type="sequence caution" evidence="27">
    <conflict type="erroneous initiation">
        <sequence resource="EMBL-CDS" id="CAD97644"/>
    </conflict>
</comment>
<protein>
    <recommendedName>
        <fullName evidence="27">Ubiquitin carboxyl-terminal hydrolase 10</fullName>
        <ecNumber evidence="10 11 17 20">3.4.19.12</ecNumber>
    </recommendedName>
    <alternativeName>
        <fullName>Deubiquitinating enzyme 10</fullName>
    </alternativeName>
    <alternativeName>
        <fullName>Ubiquitin thioesterase 10</fullName>
    </alternativeName>
    <alternativeName>
        <fullName>Ubiquitin-specific-processing protease 10</fullName>
    </alternativeName>
</protein>
<feature type="initiator methionine" description="Removed" evidence="42">
    <location>
        <position position="1"/>
    </location>
</feature>
<feature type="chain" id="PRO_0000080629" description="Ubiquitin carboxyl-terminal hydrolase 10">
    <location>
        <begin position="2"/>
        <end position="798"/>
    </location>
</feature>
<feature type="domain" description="USP">
    <location>
        <begin position="415"/>
        <end position="795"/>
    </location>
</feature>
<feature type="region of interest" description="Interaction with p53/TP53" evidence="10">
    <location>
        <begin position="2"/>
        <end position="100"/>
    </location>
</feature>
<feature type="region of interest" description="G3BP1-binding" evidence="15 22">
    <location>
        <begin position="6"/>
        <end position="21"/>
    </location>
</feature>
<feature type="region of interest" description="Disordered" evidence="4">
    <location>
        <begin position="139"/>
        <end position="166"/>
    </location>
</feature>
<feature type="region of interest" description="Disordered" evidence="4">
    <location>
        <begin position="194"/>
        <end position="257"/>
    </location>
</feature>
<feature type="region of interest" description="Disordered" evidence="4">
    <location>
        <begin position="307"/>
        <end position="337"/>
    </location>
</feature>
<feature type="region of interest" description="Disordered" evidence="4">
    <location>
        <begin position="551"/>
        <end position="594"/>
    </location>
</feature>
<feature type="compositionally biased region" description="Polar residues" evidence="4">
    <location>
        <begin position="205"/>
        <end position="219"/>
    </location>
</feature>
<feature type="compositionally biased region" description="Basic and acidic residues" evidence="4">
    <location>
        <begin position="307"/>
        <end position="316"/>
    </location>
</feature>
<feature type="compositionally biased region" description="Polar residues" evidence="4">
    <location>
        <begin position="328"/>
        <end position="337"/>
    </location>
</feature>
<feature type="compositionally biased region" description="Polar residues" evidence="4">
    <location>
        <begin position="551"/>
        <end position="562"/>
    </location>
</feature>
<feature type="compositionally biased region" description="Acidic residues" evidence="4">
    <location>
        <begin position="566"/>
        <end position="581"/>
    </location>
</feature>
<feature type="active site" description="Nucleophile" evidence="28 29 30 31 32 33">
    <location>
        <position position="424"/>
    </location>
</feature>
<feature type="active site" description="Proton acceptor" evidence="2 3">
    <location>
        <position position="749"/>
    </location>
</feature>
<feature type="modified residue" description="N-acetylalanine" evidence="42">
    <location>
        <position position="2"/>
    </location>
</feature>
<feature type="modified residue" description="Phosphothreonine" evidence="42">
    <location>
        <position position="24"/>
    </location>
</feature>
<feature type="modified residue" description="Phosphothreonine; by ATM" evidence="10">
    <location>
        <position position="42"/>
    </location>
</feature>
<feature type="modified residue" description="Phosphothreonine" evidence="40">
    <location>
        <position position="100"/>
    </location>
</feature>
<feature type="modified residue" description="Phosphoserine" evidence="1">
    <location>
        <position position="211"/>
    </location>
</feature>
<feature type="modified residue" description="Phosphoserine" evidence="40">
    <location>
        <position position="226"/>
    </location>
</feature>
<feature type="modified residue" description="Phosphoserine" evidence="45">
    <location>
        <position position="321"/>
    </location>
</feature>
<feature type="modified residue" description="Phosphoserine; by ATM" evidence="10">
    <location>
        <position position="337"/>
    </location>
</feature>
<feature type="modified residue" description="Phosphoserine" evidence="35 42 45">
    <location>
        <position position="365"/>
    </location>
</feature>
<feature type="modified residue" description="Phosphoserine" evidence="35 40 42 44">
    <location>
        <position position="370"/>
    </location>
</feature>
<feature type="modified residue" description="Phosphoserine" evidence="44">
    <location>
        <position position="547"/>
    </location>
</feature>
<feature type="modified residue" description="Phosphoserine" evidence="41">
    <location>
        <position position="563"/>
    </location>
</feature>
<feature type="modified residue" description="Phosphoserine" evidence="36 37 38 39 41 42 43 44">
    <location>
        <position position="576"/>
    </location>
</feature>
<feature type="splice variant" id="VSP_038868" description="In isoform 3." evidence="25">
    <original>MALHSP</original>
    <variation>MPWLPSPGIG</variation>
    <location>
        <begin position="1"/>
        <end position="6"/>
    </location>
</feature>
<feature type="splice variant" id="VSP_038869" description="In isoform 2." evidence="26">
    <original>M</original>
    <variation>MCSKDTVLSVCALYWRKGIQSHTPLIGAWRRGKQREQPEDRGVPMKRAA</variation>
    <location>
        <position position="1"/>
    </location>
</feature>
<feature type="sequence variant" id="VAR_015859" description="In dbSNP:rs1862792." evidence="7">
    <original>M</original>
    <variation>V</variation>
    <location>
        <position position="200"/>
    </location>
</feature>
<feature type="sequence variant" id="VAR_015860" description="In dbSNP:rs2326391." evidence="6">
    <original>S</original>
    <variation>P</variation>
    <location>
        <position position="203"/>
    </location>
</feature>
<feature type="sequence variant" id="VAR_015861" description="In dbSNP:rs1812061." evidence="6">
    <original>V</original>
    <variation>L</variation>
    <location>
        <position position="204"/>
    </location>
</feature>
<feature type="mutagenesis site" description="Abolished interaction with G3BP1 and ability to inhibit stress granule formation." evidence="15 21">
    <original>F</original>
    <variation>A</variation>
    <variation>G</variation>
    <variation>P</variation>
    <variation>W</variation>
    <variation>D</variation>
    <variation>E</variation>
    <variation>R</variation>
    <variation>H</variation>
    <variation>K</variation>
    <variation>S</variation>
    <variation>T</variation>
    <variation>C</variation>
    <variation>M</variation>
    <variation>N</variation>
    <variation>Q</variation>
    <location>
        <position position="10"/>
    </location>
</feature>
<feature type="mutagenesis site" description="Decreased but not abolished interaction with G3BP1." evidence="21">
    <original>F</original>
    <variation>Y</variation>
    <location>
        <position position="10"/>
    </location>
</feature>
<feature type="mutagenesis site" description="Decreased but not abolished interaction with G3BP1." evidence="21">
    <original>G</original>
    <variation>A</variation>
    <location>
        <position position="11"/>
    </location>
</feature>
<feature type="mutagenesis site" description="Abolished interaction with G3BP1." evidence="21">
    <original>G</original>
    <variation>I</variation>
    <variation>L</variation>
    <variation>P</variation>
    <variation>V</variation>
    <variation>F</variation>
    <variation>W</variation>
    <variation>Y</variation>
    <variation>D</variation>
    <variation>E</variation>
    <variation>R</variation>
    <variation>H</variation>
    <variation>K</variation>
    <variation>S</variation>
    <variation>T</variation>
    <variation>C</variation>
    <variation>M</variation>
    <variation>N</variation>
    <variation>Q</variation>
    <location>
        <position position="11"/>
    </location>
</feature>
<feature type="mutagenesis site" description="Decreased but not abolished interaction with G3BP1." evidence="21">
    <original>D</original>
    <variation>A</variation>
    <variation>G</variation>
    <variation>I</variation>
    <variation>L</variation>
    <variation>V</variation>
    <variation>F</variation>
    <variation>W</variation>
    <variation>Y</variation>
    <variation>E</variation>
    <variation>R</variation>
    <variation>H</variation>
    <variation>K</variation>
    <variation>S</variation>
    <variation>T</variation>
    <variation>C</variation>
    <variation>M</variation>
    <variation>N</variation>
    <variation>Q</variation>
    <location>
        <position position="12"/>
    </location>
</feature>
<feature type="mutagenesis site" description="Abolished interaction with G3BP1." evidence="21">
    <original>D</original>
    <variation>P</variation>
    <location>
        <position position="12"/>
    </location>
</feature>
<feature type="mutagenesis site" description="Abolished interaction with G3BP1." evidence="21">
    <original>F</original>
    <variation>A</variation>
    <variation>G</variation>
    <variation>P</variation>
    <variation>W</variation>
    <variation>D</variation>
    <variation>E</variation>
    <variation>R</variation>
    <variation>H</variation>
    <variation>K</variation>
    <variation>S</variation>
    <variation>T</variation>
    <variation>C</variation>
    <variation>M</variation>
    <variation>N</variation>
    <variation>Q</variation>
    <location>
        <position position="13"/>
    </location>
</feature>
<feature type="mutagenesis site" description="Decreased but not abolished interaction with G3BP1." evidence="21">
    <original>F</original>
    <variation>Y</variation>
    <variation>V</variation>
    <variation>L</variation>
    <variation>I</variation>
    <location>
        <position position="13"/>
    </location>
</feature>
<feature type="mutagenesis site" description="Abolishes phosphorylation by ATM; when associated with A-337." evidence="10">
    <original>T</original>
    <variation>A</variation>
    <location>
        <position position="42"/>
    </location>
</feature>
<feature type="mutagenesis site" description="Phospho-mimetic mutant that translocates to the nucleus in absence of genotoxic stress; when associated with D-337." evidence="10">
    <original>T</original>
    <variation>E</variation>
    <location>
        <position position="42"/>
    </location>
</feature>
<feature type="mutagenesis site" description="Abolishes phosphorylation by ATM; when associated with A-42." evidence="10">
    <original>S</original>
    <variation>A</variation>
    <location>
        <position position="337"/>
    </location>
</feature>
<feature type="mutagenesis site" description="Phospho-mimetic mutant that translocates to the nucleus in absence of genotoxic stress; when associated with E-42." evidence="10">
    <original>S</original>
    <variation>D</variation>
    <location>
        <position position="337"/>
    </location>
</feature>
<feature type="mutagenesis site" description="Abolishes deubiquitinating activity and ability to deubiquitinate 40S ribosomal proteins." evidence="5 9 11 13 16 23">
    <original>C</original>
    <variation>A</variation>
    <variation>S</variation>
    <location>
        <position position="424"/>
    </location>
</feature>
<feature type="sequence conflict" description="In Ref. 3; BAG61546." evidence="27" ref="3">
    <original>A</original>
    <variation>V</variation>
    <location>
        <position position="108"/>
    </location>
</feature>
<feature type="sequence conflict" description="In Ref. 3; BAG61546." evidence="27" ref="3">
    <original>T</original>
    <variation>A</variation>
    <location>
        <position position="263"/>
    </location>
</feature>
<feature type="strand" evidence="46">
    <location>
        <begin position="8"/>
        <end position="12"/>
    </location>
</feature>
<feature type="helix" evidence="46">
    <location>
        <begin position="15"/>
        <end position="21"/>
    </location>
</feature>
<organism>
    <name type="scientific">Homo sapiens</name>
    <name type="common">Human</name>
    <dbReference type="NCBI Taxonomy" id="9606"/>
    <lineage>
        <taxon>Eukaryota</taxon>
        <taxon>Metazoa</taxon>
        <taxon>Chordata</taxon>
        <taxon>Craniata</taxon>
        <taxon>Vertebrata</taxon>
        <taxon>Euteleostomi</taxon>
        <taxon>Mammalia</taxon>
        <taxon>Eutheria</taxon>
        <taxon>Euarchontoglires</taxon>
        <taxon>Primates</taxon>
        <taxon>Haplorrhini</taxon>
        <taxon>Catarrhini</taxon>
        <taxon>Hominidae</taxon>
        <taxon>Homo</taxon>
    </lineage>
</organism>
<dbReference type="EC" id="3.4.19.12" evidence="10 11 17 20"/>
<dbReference type="EMBL" id="D80012">
    <property type="protein sequence ID" value="BAA11507.1"/>
    <property type="molecule type" value="mRNA"/>
</dbReference>
<dbReference type="EMBL" id="AK299618">
    <property type="protein sequence ID" value="BAG61546.1"/>
    <property type="molecule type" value="mRNA"/>
</dbReference>
<dbReference type="EMBL" id="AK315570">
    <property type="protein sequence ID" value="BAG37945.1"/>
    <property type="molecule type" value="mRNA"/>
</dbReference>
<dbReference type="EMBL" id="AL162049">
    <property type="protein sequence ID" value="CAB82392.2"/>
    <property type="molecule type" value="mRNA"/>
</dbReference>
<dbReference type="EMBL" id="BX537402">
    <property type="protein sequence ID" value="CAD97644.1"/>
    <property type="status" value="ALT_INIT"/>
    <property type="molecule type" value="mRNA"/>
</dbReference>
<dbReference type="EMBL" id="AC009116">
    <property type="status" value="NOT_ANNOTATED_CDS"/>
    <property type="molecule type" value="Genomic_DNA"/>
</dbReference>
<dbReference type="EMBL" id="AC025280">
    <property type="status" value="NOT_ANNOTATED_CDS"/>
    <property type="molecule type" value="Genomic_DNA"/>
</dbReference>
<dbReference type="EMBL" id="BC000263">
    <property type="protein sequence ID" value="AAH00263.1"/>
    <property type="molecule type" value="mRNA"/>
</dbReference>
<dbReference type="CCDS" id="CCDS45537.1">
    <molecule id="Q14694-1"/>
</dbReference>
<dbReference type="CCDS" id="CCDS62004.1">
    <molecule id="Q14694-3"/>
</dbReference>
<dbReference type="RefSeq" id="NP_001259004.1">
    <molecule id="Q14694-3"/>
    <property type="nucleotide sequence ID" value="NM_001272075.2"/>
</dbReference>
<dbReference type="RefSeq" id="NP_005144.2">
    <molecule id="Q14694-1"/>
    <property type="nucleotide sequence ID" value="NM_005153.3"/>
</dbReference>
<dbReference type="PDB" id="7XHF">
    <property type="method" value="X-ray"/>
    <property type="resolution" value="2.68 A"/>
    <property type="chains" value="C/D=6-21"/>
</dbReference>
<dbReference type="PDB" id="8TH6">
    <property type="method" value="X-ray"/>
    <property type="resolution" value="2.34 A"/>
    <property type="chains" value="E/F/G/H=2-24"/>
</dbReference>
<dbReference type="PDBsum" id="7XHF"/>
<dbReference type="PDBsum" id="8TH6"/>
<dbReference type="SMR" id="Q14694"/>
<dbReference type="BioGRID" id="114554">
    <property type="interactions" value="327"/>
</dbReference>
<dbReference type="CORUM" id="Q14694"/>
<dbReference type="ELM" id="Q14694"/>
<dbReference type="FunCoup" id="Q14694">
    <property type="interactions" value="2569"/>
</dbReference>
<dbReference type="IntAct" id="Q14694">
    <property type="interactions" value="85"/>
</dbReference>
<dbReference type="MINT" id="Q14694"/>
<dbReference type="STRING" id="9606.ENSP00000457411"/>
<dbReference type="BindingDB" id="Q14694"/>
<dbReference type="ChEMBL" id="CHEMBL3407323"/>
<dbReference type="MEROPS" id="C19.018"/>
<dbReference type="GlyGen" id="Q14694">
    <property type="glycosylation" value="3 sites, 1 O-linked glycan (2 sites)"/>
</dbReference>
<dbReference type="iPTMnet" id="Q14694"/>
<dbReference type="PhosphoSitePlus" id="Q14694"/>
<dbReference type="SwissPalm" id="Q14694"/>
<dbReference type="BioMuta" id="USP10"/>
<dbReference type="DMDM" id="2501458"/>
<dbReference type="jPOST" id="Q14694"/>
<dbReference type="MassIVE" id="Q14694"/>
<dbReference type="PaxDb" id="9606-ENSP00000457411"/>
<dbReference type="PeptideAtlas" id="Q14694"/>
<dbReference type="ProteomicsDB" id="60132">
    <molecule id="Q14694-1"/>
</dbReference>
<dbReference type="ProteomicsDB" id="60133">
    <molecule id="Q14694-2"/>
</dbReference>
<dbReference type="ProteomicsDB" id="60134">
    <molecule id="Q14694-3"/>
</dbReference>
<dbReference type="Pumba" id="Q14694"/>
<dbReference type="Antibodypedia" id="1716">
    <property type="antibodies" value="396 antibodies from 39 providers"/>
</dbReference>
<dbReference type="DNASU" id="9100"/>
<dbReference type="Ensembl" id="ENST00000219473.12">
    <molecule id="Q14694-1"/>
    <property type="protein sequence ID" value="ENSP00000219473.7"/>
    <property type="gene ID" value="ENSG00000103194.16"/>
</dbReference>
<dbReference type="Ensembl" id="ENST00000570191.5">
    <molecule id="Q14694-3"/>
    <property type="protein sequence ID" value="ENSP00000457411.1"/>
    <property type="gene ID" value="ENSG00000103194.16"/>
</dbReference>
<dbReference type="GeneID" id="9100"/>
<dbReference type="KEGG" id="hsa:9100"/>
<dbReference type="MANE-Select" id="ENST00000219473.12">
    <property type="protein sequence ID" value="ENSP00000219473.7"/>
    <property type="RefSeq nucleotide sequence ID" value="NM_005153.3"/>
    <property type="RefSeq protein sequence ID" value="NP_005144.2"/>
</dbReference>
<dbReference type="UCSC" id="uc002fii.4">
    <molecule id="Q14694-1"/>
    <property type="organism name" value="human"/>
</dbReference>
<dbReference type="AGR" id="HGNC:12608"/>
<dbReference type="CTD" id="9100"/>
<dbReference type="DisGeNET" id="9100"/>
<dbReference type="GeneCards" id="USP10"/>
<dbReference type="HGNC" id="HGNC:12608">
    <property type="gene designation" value="USP10"/>
</dbReference>
<dbReference type="HPA" id="ENSG00000103194">
    <property type="expression patterns" value="Low tissue specificity"/>
</dbReference>
<dbReference type="MIM" id="609818">
    <property type="type" value="gene"/>
</dbReference>
<dbReference type="neXtProt" id="NX_Q14694"/>
<dbReference type="OpenTargets" id="ENSG00000103194"/>
<dbReference type="PharmGKB" id="PA37234"/>
<dbReference type="VEuPathDB" id="HostDB:ENSG00000103194"/>
<dbReference type="eggNOG" id="KOG1871">
    <property type="taxonomic scope" value="Eukaryota"/>
</dbReference>
<dbReference type="GeneTree" id="ENSGT00550000074994"/>
<dbReference type="HOGENOM" id="CLU_008279_4_1_1"/>
<dbReference type="InParanoid" id="Q14694"/>
<dbReference type="OMA" id="RTCGSPQ"/>
<dbReference type="OrthoDB" id="429671at2759"/>
<dbReference type="PAN-GO" id="Q14694">
    <property type="GO annotations" value="8 GO annotations based on evolutionary models"/>
</dbReference>
<dbReference type="PhylomeDB" id="Q14694"/>
<dbReference type="TreeFam" id="TF323203"/>
<dbReference type="PathwayCommons" id="Q14694"/>
<dbReference type="Reactome" id="R-HSA-5656169">
    <property type="pathway name" value="Termination of translesion DNA synthesis"/>
</dbReference>
<dbReference type="Reactome" id="R-HSA-5689880">
    <property type="pathway name" value="Ub-specific processing proteases"/>
</dbReference>
<dbReference type="SignaLink" id="Q14694"/>
<dbReference type="SIGNOR" id="Q14694"/>
<dbReference type="BioGRID-ORCS" id="9100">
    <property type="hits" value="473 hits in 1183 CRISPR screens"/>
</dbReference>
<dbReference type="CD-CODE" id="232F8A39">
    <property type="entry name" value="P-body"/>
</dbReference>
<dbReference type="CD-CODE" id="DEE660B4">
    <property type="entry name" value="Stress granule"/>
</dbReference>
<dbReference type="ChiTaRS" id="USP10">
    <property type="organism name" value="human"/>
</dbReference>
<dbReference type="GeneWiki" id="USP10"/>
<dbReference type="GenomeRNAi" id="9100"/>
<dbReference type="Pharos" id="Q14694">
    <property type="development level" value="Tchem"/>
</dbReference>
<dbReference type="PRO" id="PR:Q14694"/>
<dbReference type="Proteomes" id="UP000005640">
    <property type="component" value="Chromosome 16"/>
</dbReference>
<dbReference type="RNAct" id="Q14694">
    <property type="molecule type" value="protein"/>
</dbReference>
<dbReference type="Bgee" id="ENSG00000103194">
    <property type="expression patterns" value="Expressed in ventricular zone and 200 other cell types or tissues"/>
</dbReference>
<dbReference type="ExpressionAtlas" id="Q14694">
    <property type="expression patterns" value="baseline and differential"/>
</dbReference>
<dbReference type="GO" id="GO:0005737">
    <property type="term" value="C:cytoplasm"/>
    <property type="evidence" value="ECO:0000314"/>
    <property type="project" value="UniProtKB"/>
</dbReference>
<dbReference type="GO" id="GO:0005829">
    <property type="term" value="C:cytosol"/>
    <property type="evidence" value="ECO:0000314"/>
    <property type="project" value="HPA"/>
</dbReference>
<dbReference type="GO" id="GO:0022626">
    <property type="term" value="C:cytosolic ribosome"/>
    <property type="evidence" value="ECO:0000314"/>
    <property type="project" value="UniProt"/>
</dbReference>
<dbReference type="GO" id="GO:0005769">
    <property type="term" value="C:early endosome"/>
    <property type="evidence" value="ECO:0000314"/>
    <property type="project" value="UniProtKB"/>
</dbReference>
<dbReference type="GO" id="GO:0045111">
    <property type="term" value="C:intermediate filament cytoskeleton"/>
    <property type="evidence" value="ECO:0000314"/>
    <property type="project" value="HPA"/>
</dbReference>
<dbReference type="GO" id="GO:0005654">
    <property type="term" value="C:nucleoplasm"/>
    <property type="evidence" value="ECO:0000314"/>
    <property type="project" value="HPA"/>
</dbReference>
<dbReference type="GO" id="GO:0005634">
    <property type="term" value="C:nucleus"/>
    <property type="evidence" value="ECO:0000314"/>
    <property type="project" value="UniProtKB"/>
</dbReference>
<dbReference type="GO" id="GO:0032991">
    <property type="term" value="C:protein-containing complex"/>
    <property type="evidence" value="ECO:0000314"/>
    <property type="project" value="UniProtKB"/>
</dbReference>
<dbReference type="GO" id="GO:0004843">
    <property type="term" value="F:cysteine-type deubiquitinase activity"/>
    <property type="evidence" value="ECO:0000314"/>
    <property type="project" value="UniProtKB"/>
</dbReference>
<dbReference type="GO" id="GO:0004197">
    <property type="term" value="F:cysteine-type endopeptidase activity"/>
    <property type="evidence" value="ECO:0000315"/>
    <property type="project" value="UniProtKB"/>
</dbReference>
<dbReference type="GO" id="GO:0140678">
    <property type="term" value="F:molecular function inhibitor activity"/>
    <property type="evidence" value="ECO:0000314"/>
    <property type="project" value="UniProt"/>
</dbReference>
<dbReference type="GO" id="GO:0002039">
    <property type="term" value="F:p53 binding"/>
    <property type="evidence" value="ECO:0000353"/>
    <property type="project" value="UniProtKB"/>
</dbReference>
<dbReference type="GO" id="GO:0003723">
    <property type="term" value="F:RNA binding"/>
    <property type="evidence" value="ECO:0007005"/>
    <property type="project" value="UniProtKB"/>
</dbReference>
<dbReference type="GO" id="GO:0044325">
    <property type="term" value="F:transmembrane transporter binding"/>
    <property type="evidence" value="ECO:0000314"/>
    <property type="project" value="UniProtKB"/>
</dbReference>
<dbReference type="GO" id="GO:0006914">
    <property type="term" value="P:autophagy"/>
    <property type="evidence" value="ECO:0007669"/>
    <property type="project" value="UniProtKB-KW"/>
</dbReference>
<dbReference type="GO" id="GO:0071347">
    <property type="term" value="P:cellular response to interleukin-1"/>
    <property type="evidence" value="ECO:0000315"/>
    <property type="project" value="UniProtKB"/>
</dbReference>
<dbReference type="GO" id="GO:0006974">
    <property type="term" value="P:DNA damage response"/>
    <property type="evidence" value="ECO:0000315"/>
    <property type="project" value="UniProtKB"/>
</dbReference>
<dbReference type="GO" id="GO:0030330">
    <property type="term" value="P:DNA damage response, signal transduction by p53 class mediator"/>
    <property type="evidence" value="ECO:0000315"/>
    <property type="project" value="UniProtKB"/>
</dbReference>
<dbReference type="GO" id="GO:0035520">
    <property type="term" value="P:monoubiquitinated protein deubiquitination"/>
    <property type="evidence" value="ECO:0000314"/>
    <property type="project" value="UniProt"/>
</dbReference>
<dbReference type="GO" id="GO:0043124">
    <property type="term" value="P:negative regulation of canonical NF-kappaB signal transduction"/>
    <property type="evidence" value="ECO:0000315"/>
    <property type="project" value="UniProtKB"/>
</dbReference>
<dbReference type="GO" id="GO:0062030">
    <property type="term" value="P:negative regulation of stress granule assembly"/>
    <property type="evidence" value="ECO:0000314"/>
    <property type="project" value="UniProtKB"/>
</dbReference>
<dbReference type="GO" id="GO:0016579">
    <property type="term" value="P:protein deubiquitination"/>
    <property type="evidence" value="ECO:0000314"/>
    <property type="project" value="UniProtKB"/>
</dbReference>
<dbReference type="GO" id="GO:0006508">
    <property type="term" value="P:proteolysis"/>
    <property type="evidence" value="ECO:0007669"/>
    <property type="project" value="UniProtKB-KW"/>
</dbReference>
<dbReference type="GO" id="GO:0010506">
    <property type="term" value="P:regulation of autophagy"/>
    <property type="evidence" value="ECO:0000314"/>
    <property type="project" value="UniProtKB"/>
</dbReference>
<dbReference type="GO" id="GO:0031647">
    <property type="term" value="P:regulation of protein stability"/>
    <property type="evidence" value="ECO:0000318"/>
    <property type="project" value="GO_Central"/>
</dbReference>
<dbReference type="GO" id="GO:0072344">
    <property type="term" value="P:rescue of stalled ribosome"/>
    <property type="evidence" value="ECO:0000314"/>
    <property type="project" value="UniProtKB"/>
</dbReference>
<dbReference type="GO" id="GO:0019985">
    <property type="term" value="P:translesion synthesis"/>
    <property type="evidence" value="ECO:0000304"/>
    <property type="project" value="Reactome"/>
</dbReference>
<dbReference type="CDD" id="cd02257">
    <property type="entry name" value="Peptidase_C19"/>
    <property type="match status" value="1"/>
</dbReference>
<dbReference type="FunFam" id="3.90.70.10:FF:000015">
    <property type="entry name" value="Ubiquitin specific peptidase 10"/>
    <property type="match status" value="1"/>
</dbReference>
<dbReference type="Gene3D" id="3.90.70.10">
    <property type="entry name" value="Cysteine proteinases"/>
    <property type="match status" value="1"/>
</dbReference>
<dbReference type="InterPro" id="IPR009818">
    <property type="entry name" value="PAM2_motif"/>
</dbReference>
<dbReference type="InterPro" id="IPR038765">
    <property type="entry name" value="Papain-like_cys_pep_sf"/>
</dbReference>
<dbReference type="InterPro" id="IPR050164">
    <property type="entry name" value="Peptidase_C19"/>
</dbReference>
<dbReference type="InterPro" id="IPR001394">
    <property type="entry name" value="Peptidase_C19_UCH"/>
</dbReference>
<dbReference type="InterPro" id="IPR018200">
    <property type="entry name" value="USP_CS"/>
</dbReference>
<dbReference type="InterPro" id="IPR028889">
    <property type="entry name" value="USP_dom"/>
</dbReference>
<dbReference type="PANTHER" id="PTHR24006">
    <property type="entry name" value="UBIQUITIN CARBOXYL-TERMINAL HYDROLASE"/>
    <property type="match status" value="1"/>
</dbReference>
<dbReference type="PANTHER" id="PTHR24006:SF687">
    <property type="entry name" value="UBIQUITIN CARBOXYL-TERMINAL HYDROLASE 10"/>
    <property type="match status" value="1"/>
</dbReference>
<dbReference type="Pfam" id="PF07145">
    <property type="entry name" value="PAM2"/>
    <property type="match status" value="1"/>
</dbReference>
<dbReference type="Pfam" id="PF00443">
    <property type="entry name" value="UCH"/>
    <property type="match status" value="1"/>
</dbReference>
<dbReference type="SUPFAM" id="SSF54001">
    <property type="entry name" value="Cysteine proteinases"/>
    <property type="match status" value="1"/>
</dbReference>
<dbReference type="PROSITE" id="PS00972">
    <property type="entry name" value="USP_1"/>
    <property type="match status" value="1"/>
</dbReference>
<dbReference type="PROSITE" id="PS00973">
    <property type="entry name" value="USP_2"/>
    <property type="match status" value="1"/>
</dbReference>
<dbReference type="PROSITE" id="PS50235">
    <property type="entry name" value="USP_3"/>
    <property type="match status" value="1"/>
</dbReference>
<gene>
    <name evidence="24 34" type="primary">USP10</name>
    <name evidence="26" type="synonym">KIAA0190</name>
</gene>
<name>UBP10_HUMAN</name>
<sequence length="798" mass="87134">MALHSPQYIFGDFSPDEFNQFFVTPRSSVELPPYSGTVLCGTQAVDKLPDGQEYQRIEFGVDEVIEPSDTLPRTPSYSISSTLNPQAPEFILGCTASKITPDGITKEASYGSIDCQYPGSALALDGSSNVEAEVLENDGVSGGLGQRERKKKKKRPPGYYSYLKDGGDDSISTEALVNGHANSAVPNSVSAEDAEFMGDMPPSVTPRTCNSPQNSTDSVSDIVPDSPFPGALGSDTRTAGQPEGGPGADFGQSCFPAEAGRDTLSRTAGAQPCVGTDTTENLGVANGQILESSGEGTATNGVELHTTESIDLDPTKPESASPPADGTGSASGTLPVSQPKSWASLFHDSKPSSSSPVAYVETKYSPPAISPLVSEKQVEVKEGLVPVSEDPVAIKIAELLENVTLIHKPVSLQPRGLINKGNWCYINATLQALVACPPMYHLMKFIPLYSKVQRPCTSTPMIDSFVRLMNEFTNMPVPPKPRQALGDKIVRDIRPGAAFEPTYIYRLLTVNKSSLSEKGRQEDAEEYLGFILNGLHEEMLNLKKLLSPSNEKLTISNGPKNHSVNEEEQEEQGEGSEDEWEQVGPRNKTSVTRQADFVQTPITGIFGGHIRSVVYQQSSKESATLQPFFTLQLDIQSDKIRTVQDALESLVARESVQGYTTKTKQEVEISRRVTLEKLPPVLVLHLKRFVYEKTGGCQKLIKNIEYPVDLEISKELLSPGVKNKNFKCHRTYRLFAVVYHHGNSATGGHYTTDVFQIGLNGWLRIDDQTVKVINQYQVVKPTAERTAYLLYYRRVDLL</sequence>
<evidence type="ECO:0000250" key="1">
    <source>
        <dbReference type="UniProtKB" id="P52479"/>
    </source>
</evidence>
<evidence type="ECO:0000255" key="2">
    <source>
        <dbReference type="PROSITE-ProRule" id="PRU10092"/>
    </source>
</evidence>
<evidence type="ECO:0000255" key="3">
    <source>
        <dbReference type="PROSITE-ProRule" id="PRU10093"/>
    </source>
</evidence>
<evidence type="ECO:0000256" key="4">
    <source>
        <dbReference type="SAM" id="MobiDB-lite"/>
    </source>
</evidence>
<evidence type="ECO:0000269" key="5">
    <source>
    </source>
</evidence>
<evidence type="ECO:0000269" key="6">
    <source>
    </source>
</evidence>
<evidence type="ECO:0000269" key="7">
    <source>
    </source>
</evidence>
<evidence type="ECO:0000269" key="8">
    <source>
    </source>
</evidence>
<evidence type="ECO:0000269" key="9">
    <source>
    </source>
</evidence>
<evidence type="ECO:0000269" key="10">
    <source>
    </source>
</evidence>
<evidence type="ECO:0000269" key="11">
    <source>
    </source>
</evidence>
<evidence type="ECO:0000269" key="12">
    <source>
    </source>
</evidence>
<evidence type="ECO:0000269" key="13">
    <source>
    </source>
</evidence>
<evidence type="ECO:0000269" key="14">
    <source>
    </source>
</evidence>
<evidence type="ECO:0000269" key="15">
    <source>
    </source>
</evidence>
<evidence type="ECO:0000269" key="16">
    <source>
    </source>
</evidence>
<evidence type="ECO:0000269" key="17">
    <source>
    </source>
</evidence>
<evidence type="ECO:0000269" key="18">
    <source>
    </source>
</evidence>
<evidence type="ECO:0000269" key="19">
    <source>
    </source>
</evidence>
<evidence type="ECO:0000269" key="20">
    <source>
    </source>
</evidence>
<evidence type="ECO:0000269" key="21">
    <source>
    </source>
</evidence>
<evidence type="ECO:0000269" key="22">
    <source>
    </source>
</evidence>
<evidence type="ECO:0000269" key="23">
    <source>
    </source>
</evidence>
<evidence type="ECO:0000303" key="24">
    <source>
    </source>
</evidence>
<evidence type="ECO:0000303" key="25">
    <source>
    </source>
</evidence>
<evidence type="ECO:0000303" key="26">
    <source>
    </source>
</evidence>
<evidence type="ECO:0000305" key="27"/>
<evidence type="ECO:0000305" key="28">
    <source>
    </source>
</evidence>
<evidence type="ECO:0000305" key="29">
    <source>
    </source>
</evidence>
<evidence type="ECO:0000305" key="30">
    <source>
    </source>
</evidence>
<evidence type="ECO:0000305" key="31">
    <source>
    </source>
</evidence>
<evidence type="ECO:0000305" key="32">
    <source>
    </source>
</evidence>
<evidence type="ECO:0000305" key="33">
    <source>
    </source>
</evidence>
<evidence type="ECO:0000312" key="34">
    <source>
        <dbReference type="HGNC" id="HGNC:12608"/>
    </source>
</evidence>
<evidence type="ECO:0007744" key="35">
    <source>
    </source>
</evidence>
<evidence type="ECO:0007744" key="36">
    <source>
    </source>
</evidence>
<evidence type="ECO:0007744" key="37">
    <source>
    </source>
</evidence>
<evidence type="ECO:0007744" key="38">
    <source>
    </source>
</evidence>
<evidence type="ECO:0007744" key="39">
    <source>
    </source>
</evidence>
<evidence type="ECO:0007744" key="40">
    <source>
    </source>
</evidence>
<evidence type="ECO:0007744" key="41">
    <source>
    </source>
</evidence>
<evidence type="ECO:0007744" key="42">
    <source>
    </source>
</evidence>
<evidence type="ECO:0007744" key="43">
    <source>
    </source>
</evidence>
<evidence type="ECO:0007744" key="44">
    <source>
    </source>
</evidence>
<evidence type="ECO:0007744" key="45">
    <source>
    </source>
</evidence>
<evidence type="ECO:0007829" key="46">
    <source>
        <dbReference type="PDB" id="8TH6"/>
    </source>
</evidence>
<proteinExistence type="evidence at protein level"/>
<accession>Q14694</accession>
<accession>B2RDJ8</accession>
<accession>B4DS84</accession>
<accession>Q9BWG7</accession>
<accession>Q9NSL7</accession>